<keyword id="KW-0997">Cell inner membrane</keyword>
<keyword id="KW-1003">Cell membrane</keyword>
<keyword id="KW-0472">Membrane</keyword>
<keyword id="KW-1185">Reference proteome</keyword>
<keyword id="KW-0812">Transmembrane</keyword>
<keyword id="KW-1133">Transmembrane helix</keyword>
<dbReference type="EMBL" id="CP000800">
    <property type="protein sequence ID" value="ABV16507.1"/>
    <property type="molecule type" value="Genomic_DNA"/>
</dbReference>
<dbReference type="RefSeq" id="WP_000920762.1">
    <property type="nucleotide sequence ID" value="NC_009801.1"/>
</dbReference>
<dbReference type="KEGG" id="ecw:EcE24377A_4409"/>
<dbReference type="HOGENOM" id="CLU_032288_0_0_6"/>
<dbReference type="Proteomes" id="UP000001122">
    <property type="component" value="Chromosome"/>
</dbReference>
<dbReference type="GO" id="GO:0005886">
    <property type="term" value="C:plasma membrane"/>
    <property type="evidence" value="ECO:0007669"/>
    <property type="project" value="UniProtKB-SubCell"/>
</dbReference>
<dbReference type="HAMAP" id="MF_00672">
    <property type="entry name" value="UPF0761"/>
    <property type="match status" value="1"/>
</dbReference>
<dbReference type="InterPro" id="IPR023679">
    <property type="entry name" value="UPF0761_bac"/>
</dbReference>
<dbReference type="InterPro" id="IPR017039">
    <property type="entry name" value="Virul_fac_BrkB"/>
</dbReference>
<dbReference type="NCBIfam" id="NF002457">
    <property type="entry name" value="PRK01637.1"/>
    <property type="match status" value="1"/>
</dbReference>
<dbReference type="NCBIfam" id="TIGR00765">
    <property type="entry name" value="yihY_not_rbn"/>
    <property type="match status" value="1"/>
</dbReference>
<dbReference type="PANTHER" id="PTHR30213">
    <property type="entry name" value="INNER MEMBRANE PROTEIN YHJD"/>
    <property type="match status" value="1"/>
</dbReference>
<dbReference type="PANTHER" id="PTHR30213:SF0">
    <property type="entry name" value="UPF0761 MEMBRANE PROTEIN YIHY"/>
    <property type="match status" value="1"/>
</dbReference>
<dbReference type="Pfam" id="PF03631">
    <property type="entry name" value="Virul_fac_BrkB"/>
    <property type="match status" value="1"/>
</dbReference>
<dbReference type="PIRSF" id="PIRSF035875">
    <property type="entry name" value="RNase_BN"/>
    <property type="match status" value="1"/>
</dbReference>
<feature type="chain" id="PRO_1000061941" description="UPF0761 membrane protein YihY">
    <location>
        <begin position="1"/>
        <end position="290"/>
    </location>
</feature>
<feature type="transmembrane region" description="Helical" evidence="1">
    <location>
        <begin position="44"/>
        <end position="64"/>
    </location>
</feature>
<feature type="transmembrane region" description="Helical" evidence="1">
    <location>
        <begin position="104"/>
        <end position="124"/>
    </location>
</feature>
<feature type="transmembrane region" description="Helical" evidence="1">
    <location>
        <begin position="140"/>
        <end position="160"/>
    </location>
</feature>
<feature type="transmembrane region" description="Helical" evidence="1">
    <location>
        <begin position="183"/>
        <end position="203"/>
    </location>
</feature>
<feature type="transmembrane region" description="Helical" evidence="1">
    <location>
        <begin position="210"/>
        <end position="230"/>
    </location>
</feature>
<feature type="transmembrane region" description="Helical" evidence="1">
    <location>
        <begin position="244"/>
        <end position="264"/>
    </location>
</feature>
<sequence>MLKTIQDKARHRTRPLWAWLKLLWQRIDEDNMTTLAGNLAYVSLLSLVPLVAVVFALFAAFPMFSDVSIQLRHFIFANFLPATGDVIQRYIEQFVANSNKMTAVGACGLIVTALLLMYSIDSALNTIWRSKRARPKIYSFAVYWMILTLGPLLAGASLAISSYLLSLRWASDLNTVIDNVLRIFPLLLSWISFWLLYSIVPTIRVPNRDAIVGAFVAALLFEAGKKGFALYITMFPSYQLIYGVLAVIPILFVWVYWTWCIVLLGAEITVTLGEYRKLKQAAEQEEDDEP</sequence>
<protein>
    <recommendedName>
        <fullName evidence="1">UPF0761 membrane protein YihY</fullName>
    </recommendedName>
</protein>
<evidence type="ECO:0000255" key="1">
    <source>
        <dbReference type="HAMAP-Rule" id="MF_00672"/>
    </source>
</evidence>
<proteinExistence type="inferred from homology"/>
<accession>A7ZU91</accession>
<comment type="subcellular location">
    <subcellularLocation>
        <location evidence="1">Cell inner membrane</location>
        <topology evidence="1">Multi-pass membrane protein</topology>
    </subcellularLocation>
</comment>
<comment type="similarity">
    <text evidence="1">Belongs to the UPF0761 family.</text>
</comment>
<reference key="1">
    <citation type="journal article" date="2008" name="J. Bacteriol.">
        <title>The pangenome structure of Escherichia coli: comparative genomic analysis of E. coli commensal and pathogenic isolates.</title>
        <authorList>
            <person name="Rasko D.A."/>
            <person name="Rosovitz M.J."/>
            <person name="Myers G.S.A."/>
            <person name="Mongodin E.F."/>
            <person name="Fricke W.F."/>
            <person name="Gajer P."/>
            <person name="Crabtree J."/>
            <person name="Sebaihia M."/>
            <person name="Thomson N.R."/>
            <person name="Chaudhuri R."/>
            <person name="Henderson I.R."/>
            <person name="Sperandio V."/>
            <person name="Ravel J."/>
        </authorList>
    </citation>
    <scope>NUCLEOTIDE SEQUENCE [LARGE SCALE GENOMIC DNA]</scope>
    <source>
        <strain>E24377A / ETEC</strain>
    </source>
</reference>
<organism>
    <name type="scientific">Escherichia coli O139:H28 (strain E24377A / ETEC)</name>
    <dbReference type="NCBI Taxonomy" id="331111"/>
    <lineage>
        <taxon>Bacteria</taxon>
        <taxon>Pseudomonadati</taxon>
        <taxon>Pseudomonadota</taxon>
        <taxon>Gammaproteobacteria</taxon>
        <taxon>Enterobacterales</taxon>
        <taxon>Enterobacteriaceae</taxon>
        <taxon>Escherichia</taxon>
    </lineage>
</organism>
<name>YIHY_ECO24</name>
<gene>
    <name evidence="1" type="primary">yihY</name>
    <name type="ordered locus">EcE24377A_4409</name>
</gene>